<reference key="1">
    <citation type="submission" date="2007-04" db="EMBL/GenBank/DDBJ databases">
        <title>Complete sequence of Shewanella putrefaciens CN-32.</title>
        <authorList>
            <consortium name="US DOE Joint Genome Institute"/>
            <person name="Copeland A."/>
            <person name="Lucas S."/>
            <person name="Lapidus A."/>
            <person name="Barry K."/>
            <person name="Detter J.C."/>
            <person name="Glavina del Rio T."/>
            <person name="Hammon N."/>
            <person name="Israni S."/>
            <person name="Dalin E."/>
            <person name="Tice H."/>
            <person name="Pitluck S."/>
            <person name="Chain P."/>
            <person name="Malfatti S."/>
            <person name="Shin M."/>
            <person name="Vergez L."/>
            <person name="Schmutz J."/>
            <person name="Larimer F."/>
            <person name="Land M."/>
            <person name="Hauser L."/>
            <person name="Kyrpides N."/>
            <person name="Mikhailova N."/>
            <person name="Romine M.F."/>
            <person name="Fredrickson J."/>
            <person name="Tiedje J."/>
            <person name="Richardson P."/>
        </authorList>
    </citation>
    <scope>NUCLEOTIDE SEQUENCE [LARGE SCALE GENOMIC DNA]</scope>
    <source>
        <strain>CN-32 / ATCC BAA-453</strain>
    </source>
</reference>
<comment type="function">
    <text evidence="1">Binds 16S rRNA, required for the assembly of 30S particles and may also be responsible for determining the conformation of the 16S rRNA at the A site.</text>
</comment>
<comment type="subunit">
    <text evidence="1">Part of the 30S ribosomal subunit. Contacts proteins S3 and S10.</text>
</comment>
<comment type="similarity">
    <text evidence="1">Belongs to the universal ribosomal protein uS14 family.</text>
</comment>
<name>RS14_SHEPC</name>
<evidence type="ECO:0000255" key="1">
    <source>
        <dbReference type="HAMAP-Rule" id="MF_00537"/>
    </source>
</evidence>
<evidence type="ECO:0000305" key="2"/>
<sequence>MAKTSMKAREVKRAQLVAKYAEKRAALKAIIVSPASSDEDRWDAVLKLQALPRDSSASRKRNRCNQTGRPHGFLRKFGLSRIKLREATMRGEVPGLRKASW</sequence>
<keyword id="KW-0687">Ribonucleoprotein</keyword>
<keyword id="KW-0689">Ribosomal protein</keyword>
<keyword id="KW-0694">RNA-binding</keyword>
<keyword id="KW-0699">rRNA-binding</keyword>
<accession>A4YBX0</accession>
<protein>
    <recommendedName>
        <fullName evidence="1">Small ribosomal subunit protein uS14</fullName>
    </recommendedName>
    <alternativeName>
        <fullName evidence="2">30S ribosomal protein S14</fullName>
    </alternativeName>
</protein>
<dbReference type="EMBL" id="CP000681">
    <property type="protein sequence ID" value="ABP77453.1"/>
    <property type="molecule type" value="Genomic_DNA"/>
</dbReference>
<dbReference type="SMR" id="A4YBX0"/>
<dbReference type="STRING" id="319224.Sputcn32_3746"/>
<dbReference type="KEGG" id="spc:Sputcn32_3746"/>
<dbReference type="eggNOG" id="COG0199">
    <property type="taxonomic scope" value="Bacteria"/>
</dbReference>
<dbReference type="HOGENOM" id="CLU_139869_0_1_6"/>
<dbReference type="GO" id="GO:0005737">
    <property type="term" value="C:cytoplasm"/>
    <property type="evidence" value="ECO:0007669"/>
    <property type="project" value="UniProtKB-ARBA"/>
</dbReference>
<dbReference type="GO" id="GO:0015935">
    <property type="term" value="C:small ribosomal subunit"/>
    <property type="evidence" value="ECO:0007669"/>
    <property type="project" value="TreeGrafter"/>
</dbReference>
<dbReference type="GO" id="GO:0019843">
    <property type="term" value="F:rRNA binding"/>
    <property type="evidence" value="ECO:0007669"/>
    <property type="project" value="UniProtKB-UniRule"/>
</dbReference>
<dbReference type="GO" id="GO:0003735">
    <property type="term" value="F:structural constituent of ribosome"/>
    <property type="evidence" value="ECO:0007669"/>
    <property type="project" value="InterPro"/>
</dbReference>
<dbReference type="GO" id="GO:0006412">
    <property type="term" value="P:translation"/>
    <property type="evidence" value="ECO:0007669"/>
    <property type="project" value="UniProtKB-UniRule"/>
</dbReference>
<dbReference type="FunFam" id="1.10.287.1480:FF:000001">
    <property type="entry name" value="30S ribosomal protein S14"/>
    <property type="match status" value="1"/>
</dbReference>
<dbReference type="Gene3D" id="1.10.287.1480">
    <property type="match status" value="1"/>
</dbReference>
<dbReference type="HAMAP" id="MF_00537">
    <property type="entry name" value="Ribosomal_uS14_1"/>
    <property type="match status" value="1"/>
</dbReference>
<dbReference type="InterPro" id="IPR001209">
    <property type="entry name" value="Ribosomal_uS14"/>
</dbReference>
<dbReference type="InterPro" id="IPR023036">
    <property type="entry name" value="Ribosomal_uS14_bac/plastid"/>
</dbReference>
<dbReference type="InterPro" id="IPR018271">
    <property type="entry name" value="Ribosomal_uS14_CS"/>
</dbReference>
<dbReference type="NCBIfam" id="NF006477">
    <property type="entry name" value="PRK08881.1"/>
    <property type="match status" value="1"/>
</dbReference>
<dbReference type="PANTHER" id="PTHR19836">
    <property type="entry name" value="30S RIBOSOMAL PROTEIN S14"/>
    <property type="match status" value="1"/>
</dbReference>
<dbReference type="PANTHER" id="PTHR19836:SF19">
    <property type="entry name" value="SMALL RIBOSOMAL SUBUNIT PROTEIN US14M"/>
    <property type="match status" value="1"/>
</dbReference>
<dbReference type="Pfam" id="PF00253">
    <property type="entry name" value="Ribosomal_S14"/>
    <property type="match status" value="1"/>
</dbReference>
<dbReference type="SUPFAM" id="SSF57716">
    <property type="entry name" value="Glucocorticoid receptor-like (DNA-binding domain)"/>
    <property type="match status" value="1"/>
</dbReference>
<dbReference type="PROSITE" id="PS00527">
    <property type="entry name" value="RIBOSOMAL_S14"/>
    <property type="match status" value="1"/>
</dbReference>
<organism>
    <name type="scientific">Shewanella putrefaciens (strain CN-32 / ATCC BAA-453)</name>
    <dbReference type="NCBI Taxonomy" id="319224"/>
    <lineage>
        <taxon>Bacteria</taxon>
        <taxon>Pseudomonadati</taxon>
        <taxon>Pseudomonadota</taxon>
        <taxon>Gammaproteobacteria</taxon>
        <taxon>Alteromonadales</taxon>
        <taxon>Shewanellaceae</taxon>
        <taxon>Shewanella</taxon>
    </lineage>
</organism>
<proteinExistence type="inferred from homology"/>
<feature type="chain" id="PRO_1000128579" description="Small ribosomal subunit protein uS14">
    <location>
        <begin position="1"/>
        <end position="101"/>
    </location>
</feature>
<gene>
    <name evidence="1" type="primary">rpsN</name>
    <name type="ordered locus">Sputcn32_3746</name>
</gene>